<comment type="function">
    <text evidence="2">Catalyzes the reversible phosphorolytic breakdown of the N-glycosidic bond in the beta-(deoxy)ribonucleoside molecules, with the formation of the corresponding free purine bases and pentose-1-phosphate.</text>
</comment>
<comment type="catalytic activity">
    <reaction evidence="2">
        <text>a purine D-ribonucleoside + phosphate = a purine nucleobase + alpha-D-ribose 1-phosphate</text>
        <dbReference type="Rhea" id="RHEA:19805"/>
        <dbReference type="ChEBI" id="CHEBI:26386"/>
        <dbReference type="ChEBI" id="CHEBI:43474"/>
        <dbReference type="ChEBI" id="CHEBI:57720"/>
        <dbReference type="ChEBI" id="CHEBI:142355"/>
        <dbReference type="EC" id="2.4.2.1"/>
    </reaction>
</comment>
<comment type="catalytic activity">
    <reaction evidence="2">
        <text>a purine 2'-deoxy-D-ribonucleoside + phosphate = a purine nucleobase + 2-deoxy-alpha-D-ribose 1-phosphate</text>
        <dbReference type="Rhea" id="RHEA:36431"/>
        <dbReference type="ChEBI" id="CHEBI:26386"/>
        <dbReference type="ChEBI" id="CHEBI:43474"/>
        <dbReference type="ChEBI" id="CHEBI:57259"/>
        <dbReference type="ChEBI" id="CHEBI:142361"/>
        <dbReference type="EC" id="2.4.2.1"/>
    </reaction>
</comment>
<comment type="subunit">
    <text evidence="2">Homohexamer; trimer of homodimers.</text>
</comment>
<comment type="similarity">
    <text evidence="2">Belongs to the PNP/UDP phosphorylase family.</text>
</comment>
<protein>
    <recommendedName>
        <fullName evidence="2">Purine nucleoside phosphorylase DeoD-type</fullName>
        <shortName evidence="2">PNP</shortName>
        <ecNumber evidence="2">2.4.2.1</ecNumber>
    </recommendedName>
</protein>
<organism>
    <name type="scientific">Bacillus thuringiensis (strain Al Hakam)</name>
    <dbReference type="NCBI Taxonomy" id="412694"/>
    <lineage>
        <taxon>Bacteria</taxon>
        <taxon>Bacillati</taxon>
        <taxon>Bacillota</taxon>
        <taxon>Bacilli</taxon>
        <taxon>Bacillales</taxon>
        <taxon>Bacillaceae</taxon>
        <taxon>Bacillus</taxon>
        <taxon>Bacillus cereus group</taxon>
    </lineage>
</organism>
<dbReference type="EC" id="2.4.2.1" evidence="2"/>
<dbReference type="EMBL" id="CP000485">
    <property type="protein sequence ID" value="ABK84663.1"/>
    <property type="molecule type" value="Genomic_DNA"/>
</dbReference>
<dbReference type="RefSeq" id="WP_000110707.1">
    <property type="nucleotide sequence ID" value="NC_008600.1"/>
</dbReference>
<dbReference type="SMR" id="A0RBS0"/>
<dbReference type="GeneID" id="93009578"/>
<dbReference type="KEGG" id="btl:BALH_1318"/>
<dbReference type="HOGENOM" id="CLU_068457_2_0_9"/>
<dbReference type="GO" id="GO:0005829">
    <property type="term" value="C:cytosol"/>
    <property type="evidence" value="ECO:0007669"/>
    <property type="project" value="TreeGrafter"/>
</dbReference>
<dbReference type="GO" id="GO:0004731">
    <property type="term" value="F:purine-nucleoside phosphorylase activity"/>
    <property type="evidence" value="ECO:0007669"/>
    <property type="project" value="UniProtKB-UniRule"/>
</dbReference>
<dbReference type="GO" id="GO:0006152">
    <property type="term" value="P:purine nucleoside catabolic process"/>
    <property type="evidence" value="ECO:0007669"/>
    <property type="project" value="TreeGrafter"/>
</dbReference>
<dbReference type="CDD" id="cd09006">
    <property type="entry name" value="PNP_EcPNPI-like"/>
    <property type="match status" value="1"/>
</dbReference>
<dbReference type="Gene3D" id="3.40.50.1580">
    <property type="entry name" value="Nucleoside phosphorylase domain"/>
    <property type="match status" value="1"/>
</dbReference>
<dbReference type="HAMAP" id="MF_01627">
    <property type="entry name" value="Pur_nucleosid_phosp"/>
    <property type="match status" value="1"/>
</dbReference>
<dbReference type="InterPro" id="IPR004402">
    <property type="entry name" value="DeoD-type"/>
</dbReference>
<dbReference type="InterPro" id="IPR018016">
    <property type="entry name" value="Nucleoside_phosphorylase_CS"/>
</dbReference>
<dbReference type="InterPro" id="IPR000845">
    <property type="entry name" value="Nucleoside_phosphorylase_d"/>
</dbReference>
<dbReference type="InterPro" id="IPR035994">
    <property type="entry name" value="Nucleoside_phosphorylase_sf"/>
</dbReference>
<dbReference type="NCBIfam" id="TIGR00107">
    <property type="entry name" value="deoD"/>
    <property type="match status" value="1"/>
</dbReference>
<dbReference type="NCBIfam" id="NF004489">
    <property type="entry name" value="PRK05819.1"/>
    <property type="match status" value="1"/>
</dbReference>
<dbReference type="NCBIfam" id="NF009914">
    <property type="entry name" value="PRK13374.1"/>
    <property type="match status" value="1"/>
</dbReference>
<dbReference type="PANTHER" id="PTHR43691:SF11">
    <property type="entry name" value="FI09636P-RELATED"/>
    <property type="match status" value="1"/>
</dbReference>
<dbReference type="PANTHER" id="PTHR43691">
    <property type="entry name" value="URIDINE PHOSPHORYLASE"/>
    <property type="match status" value="1"/>
</dbReference>
<dbReference type="Pfam" id="PF01048">
    <property type="entry name" value="PNP_UDP_1"/>
    <property type="match status" value="1"/>
</dbReference>
<dbReference type="SUPFAM" id="SSF53167">
    <property type="entry name" value="Purine and uridine phosphorylases"/>
    <property type="match status" value="1"/>
</dbReference>
<dbReference type="PROSITE" id="PS01232">
    <property type="entry name" value="PNP_UDP_1"/>
    <property type="match status" value="1"/>
</dbReference>
<proteinExistence type="inferred from homology"/>
<keyword id="KW-0328">Glycosyltransferase</keyword>
<keyword id="KW-0808">Transferase</keyword>
<evidence type="ECO:0000250" key="1">
    <source>
        <dbReference type="UniProtKB" id="P50389"/>
    </source>
</evidence>
<evidence type="ECO:0000255" key="2">
    <source>
        <dbReference type="HAMAP-Rule" id="MF_01627"/>
    </source>
</evidence>
<reference key="1">
    <citation type="journal article" date="2007" name="J. Bacteriol.">
        <title>The complete genome sequence of Bacillus thuringiensis Al Hakam.</title>
        <authorList>
            <person name="Challacombe J.F."/>
            <person name="Altherr M.R."/>
            <person name="Xie G."/>
            <person name="Bhotika S.S."/>
            <person name="Brown N."/>
            <person name="Bruce D."/>
            <person name="Campbell C.S."/>
            <person name="Campbell M.L."/>
            <person name="Chen J."/>
            <person name="Chertkov O."/>
            <person name="Cleland C."/>
            <person name="Dimitrijevic M."/>
            <person name="Doggett N.A."/>
            <person name="Fawcett J.J."/>
            <person name="Glavina T."/>
            <person name="Goodwin L.A."/>
            <person name="Green L.D."/>
            <person name="Han C.S."/>
            <person name="Hill K.K."/>
            <person name="Hitchcock P."/>
            <person name="Jackson P.J."/>
            <person name="Keim P."/>
            <person name="Kewalramani A.R."/>
            <person name="Longmire J."/>
            <person name="Lucas S."/>
            <person name="Malfatti S."/>
            <person name="Martinez D."/>
            <person name="McMurry K."/>
            <person name="Meincke L.J."/>
            <person name="Misra M."/>
            <person name="Moseman B.L."/>
            <person name="Mundt M."/>
            <person name="Munk A.C."/>
            <person name="Okinaka R.T."/>
            <person name="Parson-Quintana B."/>
            <person name="Reilly L.P."/>
            <person name="Richardson P."/>
            <person name="Robinson D.L."/>
            <person name="Saunders E."/>
            <person name="Tapia R."/>
            <person name="Tesmer J.G."/>
            <person name="Thayer N."/>
            <person name="Thompson L.S."/>
            <person name="Tice H."/>
            <person name="Ticknor L.O."/>
            <person name="Wills P.L."/>
            <person name="Gilna P."/>
            <person name="Brettin T.S."/>
        </authorList>
    </citation>
    <scope>NUCLEOTIDE SEQUENCE [LARGE SCALE GENOMIC DNA]</scope>
    <source>
        <strain>Al Hakam</strain>
    </source>
</reference>
<name>DEOD_BACAH</name>
<gene>
    <name evidence="2" type="primary">deoD</name>
    <name type="ordered locus">BALH_1318</name>
</gene>
<accession>A0RBS0</accession>
<feature type="chain" id="PRO_1000069619" description="Purine nucleoside phosphorylase DeoD-type">
    <location>
        <begin position="1"/>
        <end position="235"/>
    </location>
</feature>
<feature type="active site" description="Proton donor" evidence="2">
    <location>
        <position position="204"/>
    </location>
</feature>
<feature type="binding site" evidence="1">
    <location>
        <position position="4"/>
    </location>
    <ligand>
        <name>a purine D-ribonucleoside</name>
        <dbReference type="ChEBI" id="CHEBI:142355"/>
        <note>ligand shared between dimeric partners</note>
    </ligand>
</feature>
<feature type="binding site" description="in other chain" evidence="1">
    <location>
        <position position="20"/>
    </location>
    <ligand>
        <name>phosphate</name>
        <dbReference type="ChEBI" id="CHEBI:43474"/>
        <note>ligand shared between dimeric partners</note>
    </ligand>
</feature>
<feature type="binding site" description="in other chain" evidence="1">
    <location>
        <position position="24"/>
    </location>
    <ligand>
        <name>phosphate</name>
        <dbReference type="ChEBI" id="CHEBI:43474"/>
        <note>ligand shared between dimeric partners</note>
    </ligand>
</feature>
<feature type="binding site" evidence="1">
    <location>
        <position position="43"/>
    </location>
    <ligand>
        <name>phosphate</name>
        <dbReference type="ChEBI" id="CHEBI:43474"/>
        <note>ligand shared between dimeric partners</note>
    </ligand>
</feature>
<feature type="binding site" description="in other chain" evidence="1">
    <location>
        <begin position="87"/>
        <end position="90"/>
    </location>
    <ligand>
        <name>phosphate</name>
        <dbReference type="ChEBI" id="CHEBI:43474"/>
        <note>ligand shared between dimeric partners</note>
    </ligand>
</feature>
<feature type="binding site" description="in other chain" evidence="1">
    <location>
        <begin position="179"/>
        <end position="181"/>
    </location>
    <ligand>
        <name>a purine D-ribonucleoside</name>
        <dbReference type="ChEBI" id="CHEBI:142355"/>
        <note>ligand shared between dimeric partners</note>
    </ligand>
</feature>
<feature type="binding site" description="in other chain" evidence="1">
    <location>
        <begin position="203"/>
        <end position="204"/>
    </location>
    <ligand>
        <name>a purine D-ribonucleoside</name>
        <dbReference type="ChEBI" id="CHEBI:142355"/>
        <note>ligand shared between dimeric partners</note>
    </ligand>
</feature>
<feature type="site" description="Important for catalytic activity" evidence="2">
    <location>
        <position position="217"/>
    </location>
</feature>
<sequence>MSVHIEAKQGEIAESILLPGDPLRAKYIAETFLEDVTCYNNVRGMLGFTGTYKGKRVSVQGTGMGVPSISIYVNELIQSYGVKNLIRVGTCGAIQKDVKVRDVIIAMTACTDSNMNRLTFPGFDFAPAANFDLLKKAYDAGTEKGLHVRVGNVLTADVFYRESMDMVKKLGDYGVLAVEMETTALYTLAAKYGVNALSVLTVSDHIFTGEETTSEERQTTFNEMIEIALDAAIQQ</sequence>